<keyword id="KW-0067">ATP-binding</keyword>
<keyword id="KW-0133">Cell shape</keyword>
<keyword id="KW-0961">Cell wall biogenesis/degradation</keyword>
<keyword id="KW-0963">Cytoplasm</keyword>
<keyword id="KW-0436">Ligase</keyword>
<keyword id="KW-0460">Magnesium</keyword>
<keyword id="KW-0464">Manganese</keyword>
<keyword id="KW-0479">Metal-binding</keyword>
<keyword id="KW-0547">Nucleotide-binding</keyword>
<keyword id="KW-0573">Peptidoglycan synthesis</keyword>
<keyword id="KW-1185">Reference proteome</keyword>
<evidence type="ECO:0000250" key="1"/>
<evidence type="ECO:0000305" key="2"/>
<gene>
    <name type="primary">ddlA</name>
    <name type="ordered locus">Z0477</name>
    <name type="ordered locus">ECs0431</name>
</gene>
<name>DDLA_ECO57</name>
<sequence length="364" mass="39316">MEKLRVGIVFGGKSAEHEVSLQSAKNIVDAIDKSRFDVVLLGIDKQGQWHVSDASNYLLNADDPAHIALRPSATSLAQVPGKHEHQLIDAQNGQPLPTVDVIFPIVHGTLGEDGSLQGMLRVANLPFVGSDVLASAACMDKDVTKRLLRDAGLNIAPFITLTRANRHNISFAEVESKLGLPLFVKPANQGSSVGVSKVTSEEQYAIAVDLAFEFDHKVIVEQGIKGREIECAVLGNDNPQASTCGEIVLTSDFYAYDTKYIDEDGAKVVVPAAIAPEINDKIRAIAVQAYQTLGCAGMARVDVFLTPENEVVINEINTLPGFTNISMYPKLWQASGLGYTDLITRLIELALERHAADNALKTTM</sequence>
<reference key="1">
    <citation type="journal article" date="2001" name="Nature">
        <title>Genome sequence of enterohaemorrhagic Escherichia coli O157:H7.</title>
        <authorList>
            <person name="Perna N.T."/>
            <person name="Plunkett G. III"/>
            <person name="Burland V."/>
            <person name="Mau B."/>
            <person name="Glasner J.D."/>
            <person name="Rose D.J."/>
            <person name="Mayhew G.F."/>
            <person name="Evans P.S."/>
            <person name="Gregor J."/>
            <person name="Kirkpatrick H.A."/>
            <person name="Posfai G."/>
            <person name="Hackett J."/>
            <person name="Klink S."/>
            <person name="Boutin A."/>
            <person name="Shao Y."/>
            <person name="Miller L."/>
            <person name="Grotbeck E.J."/>
            <person name="Davis N.W."/>
            <person name="Lim A."/>
            <person name="Dimalanta E.T."/>
            <person name="Potamousis K."/>
            <person name="Apodaca J."/>
            <person name="Anantharaman T.S."/>
            <person name="Lin J."/>
            <person name="Yen G."/>
            <person name="Schwartz D.C."/>
            <person name="Welch R.A."/>
            <person name="Blattner F.R."/>
        </authorList>
    </citation>
    <scope>NUCLEOTIDE SEQUENCE [LARGE SCALE GENOMIC DNA]</scope>
    <source>
        <strain>O157:H7 / EDL933 / ATCC 700927 / EHEC</strain>
    </source>
</reference>
<reference key="2">
    <citation type="journal article" date="2001" name="DNA Res.">
        <title>Complete genome sequence of enterohemorrhagic Escherichia coli O157:H7 and genomic comparison with a laboratory strain K-12.</title>
        <authorList>
            <person name="Hayashi T."/>
            <person name="Makino K."/>
            <person name="Ohnishi M."/>
            <person name="Kurokawa K."/>
            <person name="Ishii K."/>
            <person name="Yokoyama K."/>
            <person name="Han C.-G."/>
            <person name="Ohtsubo E."/>
            <person name="Nakayama K."/>
            <person name="Murata T."/>
            <person name="Tanaka M."/>
            <person name="Tobe T."/>
            <person name="Iida T."/>
            <person name="Takami H."/>
            <person name="Honda T."/>
            <person name="Sasakawa C."/>
            <person name="Ogasawara N."/>
            <person name="Yasunaga T."/>
            <person name="Kuhara S."/>
            <person name="Shiba T."/>
            <person name="Hattori M."/>
            <person name="Shinagawa H."/>
        </authorList>
    </citation>
    <scope>NUCLEOTIDE SEQUENCE [LARGE SCALE GENOMIC DNA]</scope>
    <source>
        <strain>O157:H7 / Sakai / RIMD 0509952 / EHEC</strain>
    </source>
</reference>
<proteinExistence type="inferred from homology"/>
<protein>
    <recommendedName>
        <fullName>D-alanine--D-alanine ligase A</fullName>
        <ecNumber>6.3.2.4</ecNumber>
    </recommendedName>
    <alternativeName>
        <fullName>D-Ala-D-Ala ligase A</fullName>
    </alternativeName>
    <alternativeName>
        <fullName>D-alanylalanine synthetase A</fullName>
    </alternativeName>
</protein>
<dbReference type="EC" id="6.3.2.4"/>
<dbReference type="EMBL" id="AE005174">
    <property type="protein sequence ID" value="AAG54727.1"/>
    <property type="molecule type" value="Genomic_DNA"/>
</dbReference>
<dbReference type="EMBL" id="BA000007">
    <property type="protein sequence ID" value="BAB33854.1"/>
    <property type="molecule type" value="Genomic_DNA"/>
</dbReference>
<dbReference type="PIR" id="C85533">
    <property type="entry name" value="C85533"/>
</dbReference>
<dbReference type="PIR" id="G90682">
    <property type="entry name" value="G90682"/>
</dbReference>
<dbReference type="RefSeq" id="NP_308458.1">
    <property type="nucleotide sequence ID" value="NC_002695.1"/>
</dbReference>
<dbReference type="RefSeq" id="WP_000413677.1">
    <property type="nucleotide sequence ID" value="NZ_VOAI01000005.1"/>
</dbReference>
<dbReference type="SMR" id="P0A6J9"/>
<dbReference type="STRING" id="155864.Z0477"/>
<dbReference type="GeneID" id="914533"/>
<dbReference type="GeneID" id="93777081"/>
<dbReference type="KEGG" id="ece:Z0477"/>
<dbReference type="KEGG" id="ecs:ECs_0431"/>
<dbReference type="PATRIC" id="fig|386585.9.peg.526"/>
<dbReference type="eggNOG" id="COG1181">
    <property type="taxonomic scope" value="Bacteria"/>
</dbReference>
<dbReference type="HOGENOM" id="CLU_039268_0_1_6"/>
<dbReference type="OMA" id="NMHSKYF"/>
<dbReference type="UniPathway" id="UPA00219"/>
<dbReference type="Proteomes" id="UP000000558">
    <property type="component" value="Chromosome"/>
</dbReference>
<dbReference type="Proteomes" id="UP000002519">
    <property type="component" value="Chromosome"/>
</dbReference>
<dbReference type="GO" id="GO:0005829">
    <property type="term" value="C:cytosol"/>
    <property type="evidence" value="ECO:0007669"/>
    <property type="project" value="TreeGrafter"/>
</dbReference>
<dbReference type="GO" id="GO:0005524">
    <property type="term" value="F:ATP binding"/>
    <property type="evidence" value="ECO:0007669"/>
    <property type="project" value="UniProtKB-KW"/>
</dbReference>
<dbReference type="GO" id="GO:0008716">
    <property type="term" value="F:D-alanine-D-alanine ligase activity"/>
    <property type="evidence" value="ECO:0007669"/>
    <property type="project" value="UniProtKB-UniRule"/>
</dbReference>
<dbReference type="GO" id="GO:0046872">
    <property type="term" value="F:metal ion binding"/>
    <property type="evidence" value="ECO:0007669"/>
    <property type="project" value="UniProtKB-KW"/>
</dbReference>
<dbReference type="GO" id="GO:0071555">
    <property type="term" value="P:cell wall organization"/>
    <property type="evidence" value="ECO:0007669"/>
    <property type="project" value="UniProtKB-KW"/>
</dbReference>
<dbReference type="GO" id="GO:0009252">
    <property type="term" value="P:peptidoglycan biosynthetic process"/>
    <property type="evidence" value="ECO:0007669"/>
    <property type="project" value="UniProtKB-UniRule"/>
</dbReference>
<dbReference type="GO" id="GO:0008360">
    <property type="term" value="P:regulation of cell shape"/>
    <property type="evidence" value="ECO:0007669"/>
    <property type="project" value="UniProtKB-KW"/>
</dbReference>
<dbReference type="FunFam" id="3.30.1490.20:FF:000007">
    <property type="entry name" value="D-alanine--D-alanine ligase"/>
    <property type="match status" value="1"/>
</dbReference>
<dbReference type="FunFam" id="3.30.470.20:FF:000008">
    <property type="entry name" value="D-alanine--D-alanine ligase"/>
    <property type="match status" value="1"/>
</dbReference>
<dbReference type="FunFam" id="3.40.50.20:FF:000015">
    <property type="entry name" value="D-alanine--D-alanine ligase"/>
    <property type="match status" value="1"/>
</dbReference>
<dbReference type="Gene3D" id="3.40.50.20">
    <property type="match status" value="1"/>
</dbReference>
<dbReference type="Gene3D" id="3.30.1490.20">
    <property type="entry name" value="ATP-grasp fold, A domain"/>
    <property type="match status" value="1"/>
</dbReference>
<dbReference type="Gene3D" id="3.30.470.20">
    <property type="entry name" value="ATP-grasp fold, B domain"/>
    <property type="match status" value="1"/>
</dbReference>
<dbReference type="HAMAP" id="MF_00047">
    <property type="entry name" value="Dala_Dala_lig"/>
    <property type="match status" value="1"/>
</dbReference>
<dbReference type="InterPro" id="IPR011761">
    <property type="entry name" value="ATP-grasp"/>
</dbReference>
<dbReference type="InterPro" id="IPR013815">
    <property type="entry name" value="ATP_grasp_subdomain_1"/>
</dbReference>
<dbReference type="InterPro" id="IPR000291">
    <property type="entry name" value="D-Ala_lig_Van_CS"/>
</dbReference>
<dbReference type="InterPro" id="IPR005905">
    <property type="entry name" value="D_ala_D_ala"/>
</dbReference>
<dbReference type="InterPro" id="IPR011095">
    <property type="entry name" value="Dala_Dala_lig_C"/>
</dbReference>
<dbReference type="InterPro" id="IPR011127">
    <property type="entry name" value="Dala_Dala_lig_N"/>
</dbReference>
<dbReference type="InterPro" id="IPR016185">
    <property type="entry name" value="PreATP-grasp_dom_sf"/>
</dbReference>
<dbReference type="NCBIfam" id="TIGR01205">
    <property type="entry name" value="D_ala_D_alaTIGR"/>
    <property type="match status" value="1"/>
</dbReference>
<dbReference type="NCBIfam" id="NF002378">
    <property type="entry name" value="PRK01372.1"/>
    <property type="match status" value="1"/>
</dbReference>
<dbReference type="NCBIfam" id="NF002525">
    <property type="entry name" value="PRK01966.1-1"/>
    <property type="match status" value="1"/>
</dbReference>
<dbReference type="NCBIfam" id="NF002528">
    <property type="entry name" value="PRK01966.1-4"/>
    <property type="match status" value="1"/>
</dbReference>
<dbReference type="PANTHER" id="PTHR23132">
    <property type="entry name" value="D-ALANINE--D-ALANINE LIGASE"/>
    <property type="match status" value="1"/>
</dbReference>
<dbReference type="PANTHER" id="PTHR23132:SF25">
    <property type="entry name" value="D-ALANINE--D-ALANINE LIGASE A"/>
    <property type="match status" value="1"/>
</dbReference>
<dbReference type="Pfam" id="PF07478">
    <property type="entry name" value="Dala_Dala_lig_C"/>
    <property type="match status" value="1"/>
</dbReference>
<dbReference type="Pfam" id="PF01820">
    <property type="entry name" value="Dala_Dala_lig_N"/>
    <property type="match status" value="1"/>
</dbReference>
<dbReference type="PIRSF" id="PIRSF039102">
    <property type="entry name" value="Ddl/VanB"/>
    <property type="match status" value="1"/>
</dbReference>
<dbReference type="SUPFAM" id="SSF56059">
    <property type="entry name" value="Glutathione synthetase ATP-binding domain-like"/>
    <property type="match status" value="1"/>
</dbReference>
<dbReference type="SUPFAM" id="SSF52440">
    <property type="entry name" value="PreATP-grasp domain"/>
    <property type="match status" value="1"/>
</dbReference>
<dbReference type="PROSITE" id="PS50975">
    <property type="entry name" value="ATP_GRASP"/>
    <property type="match status" value="1"/>
</dbReference>
<dbReference type="PROSITE" id="PS00843">
    <property type="entry name" value="DALA_DALA_LIGASE_1"/>
    <property type="match status" value="1"/>
</dbReference>
<dbReference type="PROSITE" id="PS00844">
    <property type="entry name" value="DALA_DALA_LIGASE_2"/>
    <property type="match status" value="1"/>
</dbReference>
<accession>P0A6J9</accession>
<accession>P23844</accession>
<organism>
    <name type="scientific">Escherichia coli O157:H7</name>
    <dbReference type="NCBI Taxonomy" id="83334"/>
    <lineage>
        <taxon>Bacteria</taxon>
        <taxon>Pseudomonadati</taxon>
        <taxon>Pseudomonadota</taxon>
        <taxon>Gammaproteobacteria</taxon>
        <taxon>Enterobacterales</taxon>
        <taxon>Enterobacteriaceae</taxon>
        <taxon>Escherichia</taxon>
    </lineage>
</organism>
<feature type="chain" id="PRO_0000177816" description="D-alanine--D-alanine ligase A">
    <location>
        <begin position="1"/>
        <end position="364"/>
    </location>
</feature>
<feature type="domain" description="ATP-grasp">
    <location>
        <begin position="145"/>
        <end position="348"/>
    </location>
</feature>
<feature type="binding site" evidence="1">
    <location>
        <begin position="175"/>
        <end position="230"/>
    </location>
    <ligand>
        <name>ATP</name>
        <dbReference type="ChEBI" id="CHEBI:30616"/>
    </ligand>
</feature>
<feature type="binding site" evidence="1">
    <location>
        <position position="302"/>
    </location>
    <ligand>
        <name>Mg(2+)</name>
        <dbReference type="ChEBI" id="CHEBI:18420"/>
        <label>1</label>
    </ligand>
</feature>
<feature type="binding site" evidence="1">
    <location>
        <position position="315"/>
    </location>
    <ligand>
        <name>Mg(2+)</name>
        <dbReference type="ChEBI" id="CHEBI:18420"/>
        <label>1</label>
    </ligand>
</feature>
<feature type="binding site" evidence="1">
    <location>
        <position position="315"/>
    </location>
    <ligand>
        <name>Mg(2+)</name>
        <dbReference type="ChEBI" id="CHEBI:18420"/>
        <label>2</label>
    </ligand>
</feature>
<feature type="binding site" evidence="1">
    <location>
        <position position="317"/>
    </location>
    <ligand>
        <name>Mg(2+)</name>
        <dbReference type="ChEBI" id="CHEBI:18420"/>
        <label>2</label>
    </ligand>
</feature>
<comment type="function">
    <text evidence="1">Cell wall formation.</text>
</comment>
<comment type="catalytic activity">
    <reaction>
        <text>2 D-alanine + ATP = D-alanyl-D-alanine + ADP + phosphate + H(+)</text>
        <dbReference type="Rhea" id="RHEA:11224"/>
        <dbReference type="ChEBI" id="CHEBI:15378"/>
        <dbReference type="ChEBI" id="CHEBI:30616"/>
        <dbReference type="ChEBI" id="CHEBI:43474"/>
        <dbReference type="ChEBI" id="CHEBI:57416"/>
        <dbReference type="ChEBI" id="CHEBI:57822"/>
        <dbReference type="ChEBI" id="CHEBI:456216"/>
        <dbReference type="EC" id="6.3.2.4"/>
    </reaction>
</comment>
<comment type="cofactor">
    <cofactor evidence="1">
        <name>Mg(2+)</name>
        <dbReference type="ChEBI" id="CHEBI:18420"/>
    </cofactor>
    <cofactor evidence="1">
        <name>Mn(2+)</name>
        <dbReference type="ChEBI" id="CHEBI:29035"/>
    </cofactor>
    <text evidence="1">Binds 2 magnesium or manganese ions per subunit.</text>
</comment>
<comment type="pathway">
    <text>Cell wall biogenesis; peptidoglycan biosynthesis.</text>
</comment>
<comment type="subcellular location">
    <subcellularLocation>
        <location evidence="1">Cytoplasm</location>
    </subcellularLocation>
</comment>
<comment type="similarity">
    <text evidence="2">Belongs to the D-alanine--D-alanine ligase family.</text>
</comment>